<reference key="1">
    <citation type="journal article" date="2003" name="Cytogenet. Genome Res.">
        <title>Characterization of two novel KRAB-domain-containing zinc finger genes, ZNF460 and ZNF461, on human chromosome 19q13.1-q13.4.</title>
        <authorList>
            <person name="Dai J."/>
            <person name="Li Y."/>
            <person name="Ji C."/>
            <person name="Jin F."/>
            <person name="Zheng Z."/>
            <person name="Wang X."/>
            <person name="Sun X."/>
            <person name="Xu X."/>
            <person name="Gu S."/>
            <person name="Xie Y."/>
            <person name="Mao Y."/>
        </authorList>
    </citation>
    <scope>NUCLEOTIDE SEQUENCE [MRNA] (ISOFORM 1)</scope>
    <scope>TISSUE SPECIFICITY</scope>
</reference>
<reference key="2">
    <citation type="journal article" date="2004" name="Nat. Genet.">
        <title>Complete sequencing and characterization of 21,243 full-length human cDNAs.</title>
        <authorList>
            <person name="Ota T."/>
            <person name="Suzuki Y."/>
            <person name="Nishikawa T."/>
            <person name="Otsuki T."/>
            <person name="Sugiyama T."/>
            <person name="Irie R."/>
            <person name="Wakamatsu A."/>
            <person name="Hayashi K."/>
            <person name="Sato H."/>
            <person name="Nagai K."/>
            <person name="Kimura K."/>
            <person name="Makita H."/>
            <person name="Sekine M."/>
            <person name="Obayashi M."/>
            <person name="Nishi T."/>
            <person name="Shibahara T."/>
            <person name="Tanaka T."/>
            <person name="Ishii S."/>
            <person name="Yamamoto J."/>
            <person name="Saito K."/>
            <person name="Kawai Y."/>
            <person name="Isono Y."/>
            <person name="Nakamura Y."/>
            <person name="Nagahari K."/>
            <person name="Murakami K."/>
            <person name="Yasuda T."/>
            <person name="Iwayanagi T."/>
            <person name="Wagatsuma M."/>
            <person name="Shiratori A."/>
            <person name="Sudo H."/>
            <person name="Hosoiri T."/>
            <person name="Kaku Y."/>
            <person name="Kodaira H."/>
            <person name="Kondo H."/>
            <person name="Sugawara M."/>
            <person name="Takahashi M."/>
            <person name="Kanda K."/>
            <person name="Yokoi T."/>
            <person name="Furuya T."/>
            <person name="Kikkawa E."/>
            <person name="Omura Y."/>
            <person name="Abe K."/>
            <person name="Kamihara K."/>
            <person name="Katsuta N."/>
            <person name="Sato K."/>
            <person name="Tanikawa M."/>
            <person name="Yamazaki M."/>
            <person name="Ninomiya K."/>
            <person name="Ishibashi T."/>
            <person name="Yamashita H."/>
            <person name="Murakawa K."/>
            <person name="Fujimori K."/>
            <person name="Tanai H."/>
            <person name="Kimata M."/>
            <person name="Watanabe M."/>
            <person name="Hiraoka S."/>
            <person name="Chiba Y."/>
            <person name="Ishida S."/>
            <person name="Ono Y."/>
            <person name="Takiguchi S."/>
            <person name="Watanabe S."/>
            <person name="Yosida M."/>
            <person name="Hotuta T."/>
            <person name="Kusano J."/>
            <person name="Kanehori K."/>
            <person name="Takahashi-Fujii A."/>
            <person name="Hara H."/>
            <person name="Tanase T.-O."/>
            <person name="Nomura Y."/>
            <person name="Togiya S."/>
            <person name="Komai F."/>
            <person name="Hara R."/>
            <person name="Takeuchi K."/>
            <person name="Arita M."/>
            <person name="Imose N."/>
            <person name="Musashino K."/>
            <person name="Yuuki H."/>
            <person name="Oshima A."/>
            <person name="Sasaki N."/>
            <person name="Aotsuka S."/>
            <person name="Yoshikawa Y."/>
            <person name="Matsunawa H."/>
            <person name="Ichihara T."/>
            <person name="Shiohata N."/>
            <person name="Sano S."/>
            <person name="Moriya S."/>
            <person name="Momiyama H."/>
            <person name="Satoh N."/>
            <person name="Takami S."/>
            <person name="Terashima Y."/>
            <person name="Suzuki O."/>
            <person name="Nakagawa S."/>
            <person name="Senoh A."/>
            <person name="Mizoguchi H."/>
            <person name="Goto Y."/>
            <person name="Shimizu F."/>
            <person name="Wakebe H."/>
            <person name="Hishigaki H."/>
            <person name="Watanabe T."/>
            <person name="Sugiyama A."/>
            <person name="Takemoto M."/>
            <person name="Kawakami B."/>
            <person name="Yamazaki M."/>
            <person name="Watanabe K."/>
            <person name="Kumagai A."/>
            <person name="Itakura S."/>
            <person name="Fukuzumi Y."/>
            <person name="Fujimori Y."/>
            <person name="Komiyama M."/>
            <person name="Tashiro H."/>
            <person name="Tanigami A."/>
            <person name="Fujiwara T."/>
            <person name="Ono T."/>
            <person name="Yamada K."/>
            <person name="Fujii Y."/>
            <person name="Ozaki K."/>
            <person name="Hirao M."/>
            <person name="Ohmori Y."/>
            <person name="Kawabata A."/>
            <person name="Hikiji T."/>
            <person name="Kobatake N."/>
            <person name="Inagaki H."/>
            <person name="Ikema Y."/>
            <person name="Okamoto S."/>
            <person name="Okitani R."/>
            <person name="Kawakami T."/>
            <person name="Noguchi S."/>
            <person name="Itoh T."/>
            <person name="Shigeta K."/>
            <person name="Senba T."/>
            <person name="Matsumura K."/>
            <person name="Nakajima Y."/>
            <person name="Mizuno T."/>
            <person name="Morinaga M."/>
            <person name="Sasaki M."/>
            <person name="Togashi T."/>
            <person name="Oyama M."/>
            <person name="Hata H."/>
            <person name="Watanabe M."/>
            <person name="Komatsu T."/>
            <person name="Mizushima-Sugano J."/>
            <person name="Satoh T."/>
            <person name="Shirai Y."/>
            <person name="Takahashi Y."/>
            <person name="Nakagawa K."/>
            <person name="Okumura K."/>
            <person name="Nagase T."/>
            <person name="Nomura N."/>
            <person name="Kikuchi H."/>
            <person name="Masuho Y."/>
            <person name="Yamashita R."/>
            <person name="Nakai K."/>
            <person name="Yada T."/>
            <person name="Nakamura Y."/>
            <person name="Ohara O."/>
            <person name="Isogai T."/>
            <person name="Sugano S."/>
        </authorList>
    </citation>
    <scope>NUCLEOTIDE SEQUENCE [LARGE SCALE MRNA] (ISOFORM 1)</scope>
    <source>
        <tissue>Trachea</tissue>
    </source>
</reference>
<reference key="3">
    <citation type="journal article" date="2004" name="Genome Res.">
        <title>The status, quality, and expansion of the NIH full-length cDNA project: the Mammalian Gene Collection (MGC).</title>
        <authorList>
            <consortium name="The MGC Project Team"/>
        </authorList>
    </citation>
    <scope>NUCLEOTIDE SEQUENCE [LARGE SCALE MRNA] (ISOFORM 2)</scope>
    <source>
        <tissue>Brain</tissue>
    </source>
</reference>
<reference key="4">
    <citation type="submission" date="1998-12" db="EMBL/GenBank/DDBJ databases">
        <title>Identification and characterization of novel zinc finger proteins in the human ovary.</title>
        <authorList>
            <person name="Okada T."/>
            <person name="Mizutani T."/>
            <person name="Miyamoto K."/>
        </authorList>
    </citation>
    <scope>NUCLEOTIDE SEQUENCE [MRNA] OF 244-563</scope>
    <source>
        <tissue>Ovary</tissue>
    </source>
</reference>
<sequence>MAHELVMFRDVAIDVSQEEWECLNPAQRNLYKEVMLENYSNLVSLGLSVSKPAVISSLEQGKEPWMVVREETGRWCPGTWKTWGFHNNFLDNNEATDINADLASRDEPQKLSPKRDIYETELSQWVNMEEFKSHSPERSIFSAIWEGNCHFEQHQGQEEGYFRQLMINHENMPIFSQHTLLTQEFYDREKISECKKCRKIFSYHLFFSHHKRTHSKELSECKECTEIVNTPCLFKQQTIQNGDKCNECKECWKAFVHCSQLKHLRIHNGEKRYECNECGKAFNYGSELTLHQRIHTGEKPYECKECGKAFRQRSQLTQHQRLHTGEKPYECKQCGKAFIRGFQLTEHLRLHTGEKPYECKECGKTFRHRSHLTIHQRIHTGEKPYECRECGKAFSYHSSFSHHQKIHSGKKPYECHECGKAFCDGLQLTLHQRIHTGEKPYECKECGKTFRQCSHLKRHQRIHTGEKPHECMICGKAFRLHSHLIQHQRIHTGEKPYECKECGKAFSYHSSFSHHQRIHSGKKPYQCGKAFNHRLQLNLHQTLHTGEKPVRFPLLPPHPSLAS</sequence>
<gene>
    <name type="primary">ZNF461</name>
    <name type="synonym">GIOT1</name>
</gene>
<protein>
    <recommendedName>
        <fullName>Zinc finger protein 461</fullName>
    </recommendedName>
    <alternativeName>
        <fullName>Gonadotropin-inducible ovary transcription repressor 1</fullName>
        <shortName>GIOT-1</shortName>
    </alternativeName>
</protein>
<accession>Q8TAF7</accession>
<accession>A8K9W9</accession>
<accession>Q6VSF7</accession>
<accession>Q9ULZ8</accession>
<organism>
    <name type="scientific">Homo sapiens</name>
    <name type="common">Human</name>
    <dbReference type="NCBI Taxonomy" id="9606"/>
    <lineage>
        <taxon>Eukaryota</taxon>
        <taxon>Metazoa</taxon>
        <taxon>Chordata</taxon>
        <taxon>Craniata</taxon>
        <taxon>Vertebrata</taxon>
        <taxon>Euteleostomi</taxon>
        <taxon>Mammalia</taxon>
        <taxon>Eutheria</taxon>
        <taxon>Euarchontoglires</taxon>
        <taxon>Primates</taxon>
        <taxon>Haplorrhini</taxon>
        <taxon>Catarrhini</taxon>
        <taxon>Hominidae</taxon>
        <taxon>Homo</taxon>
    </lineage>
</organism>
<feature type="chain" id="PRO_0000047196" description="Zinc finger protein 461">
    <location>
        <begin position="1"/>
        <end position="563"/>
    </location>
</feature>
<feature type="domain" description="KRAB" evidence="2">
    <location>
        <begin position="6"/>
        <end position="77"/>
    </location>
</feature>
<feature type="zinc finger region" description="C2H2-type 1" evidence="1">
    <location>
        <begin position="192"/>
        <end position="214"/>
    </location>
</feature>
<feature type="zinc finger region" description="C2H2-type 2" evidence="1">
    <location>
        <begin position="246"/>
        <end position="267"/>
    </location>
</feature>
<feature type="zinc finger region" description="C2H2-type 3" evidence="1">
    <location>
        <begin position="273"/>
        <end position="295"/>
    </location>
</feature>
<feature type="zinc finger region" description="C2H2-type 4" evidence="1">
    <location>
        <begin position="301"/>
        <end position="323"/>
    </location>
</feature>
<feature type="zinc finger region" description="C2H2-type 5" evidence="1">
    <location>
        <begin position="329"/>
        <end position="351"/>
    </location>
</feature>
<feature type="zinc finger region" description="C2H2-type 6" evidence="1">
    <location>
        <begin position="357"/>
        <end position="379"/>
    </location>
</feature>
<feature type="zinc finger region" description="C2H2-type 7" evidence="1">
    <location>
        <begin position="385"/>
        <end position="407"/>
    </location>
</feature>
<feature type="zinc finger region" description="C2H2-type 8" evidence="1">
    <location>
        <begin position="413"/>
        <end position="435"/>
    </location>
</feature>
<feature type="zinc finger region" description="C2H2-type 9" evidence="1">
    <location>
        <begin position="441"/>
        <end position="463"/>
    </location>
</feature>
<feature type="zinc finger region" description="C2H2-type 10" evidence="1">
    <location>
        <begin position="469"/>
        <end position="491"/>
    </location>
</feature>
<feature type="zinc finger region" description="C2H2-type 11" evidence="1">
    <location>
        <begin position="497"/>
        <end position="519"/>
    </location>
</feature>
<feature type="zinc finger region" description="C2H2-type 12; degenerate" evidence="1">
    <location>
        <begin position="522"/>
        <end position="544"/>
    </location>
</feature>
<feature type="splice variant" id="VSP_011396" description="In isoform 2." evidence="4">
    <location>
        <begin position="1"/>
        <end position="127"/>
    </location>
</feature>
<feature type="sequence variant" id="VAR_052834" description="In dbSNP:rs10419469.">
    <original>N</original>
    <variation>S</variation>
    <location>
        <position position="87"/>
    </location>
</feature>
<comment type="function">
    <text>May be involved in transcriptional regulation.</text>
</comment>
<comment type="interaction">
    <interactant intactId="EBI-10271693">
        <id>Q8TAF7</id>
    </interactant>
    <interactant intactId="EBI-724076">
        <id>Q99750</id>
        <label>MDFI</label>
    </interactant>
    <organismsDiffer>false</organismsDiffer>
    <experiments>3</experiments>
</comment>
<comment type="subcellular location">
    <subcellularLocation>
        <location evidence="5">Nucleus</location>
    </subcellularLocation>
</comment>
<comment type="alternative products">
    <event type="alternative splicing"/>
    <isoform>
        <id>Q8TAF7-1</id>
        <name>1</name>
        <sequence type="displayed"/>
    </isoform>
    <isoform>
        <id>Q8TAF7-2</id>
        <name>2</name>
        <sequence type="described" ref="VSP_011396"/>
    </isoform>
</comment>
<comment type="tissue specificity">
    <text evidence="3">Widely expressed, with highest levels in liver, kidney, pancreas, thymus, and small intestine.</text>
</comment>
<comment type="similarity">
    <text evidence="5">Belongs to the krueppel C2H2-type zinc-finger protein family.</text>
</comment>
<evidence type="ECO:0000255" key="1">
    <source>
        <dbReference type="PROSITE-ProRule" id="PRU00042"/>
    </source>
</evidence>
<evidence type="ECO:0000255" key="2">
    <source>
        <dbReference type="PROSITE-ProRule" id="PRU00119"/>
    </source>
</evidence>
<evidence type="ECO:0000269" key="3">
    <source>
    </source>
</evidence>
<evidence type="ECO:0000303" key="4">
    <source>
    </source>
</evidence>
<evidence type="ECO:0000305" key="5"/>
<name>ZN461_HUMAN</name>
<proteinExistence type="evidence at protein level"/>
<dbReference type="EMBL" id="AY329493">
    <property type="protein sequence ID" value="AAR00226.1"/>
    <property type="molecule type" value="mRNA"/>
</dbReference>
<dbReference type="EMBL" id="AK292834">
    <property type="protein sequence ID" value="BAF85523.1"/>
    <property type="molecule type" value="mRNA"/>
</dbReference>
<dbReference type="EMBL" id="BC028631">
    <property type="protein sequence ID" value="AAH28631.1"/>
    <property type="molecule type" value="mRNA"/>
</dbReference>
<dbReference type="EMBL" id="AB021641">
    <property type="protein sequence ID" value="BAA86987.1"/>
    <property type="molecule type" value="mRNA"/>
</dbReference>
<dbReference type="CCDS" id="CCDS54257.1">
    <molecule id="Q8TAF7-1"/>
</dbReference>
<dbReference type="RefSeq" id="NP_001284552.1">
    <property type="nucleotide sequence ID" value="NM_001297623.2"/>
</dbReference>
<dbReference type="RefSeq" id="NP_694989.2">
    <molecule id="Q8TAF7-1"/>
    <property type="nucleotide sequence ID" value="NM_153257.4"/>
</dbReference>
<dbReference type="RefSeq" id="XP_011525788.1">
    <molecule id="Q8TAF7-2"/>
    <property type="nucleotide sequence ID" value="XM_011527486.3"/>
</dbReference>
<dbReference type="RefSeq" id="XP_047295636.1">
    <molecule id="Q8TAF7-2"/>
    <property type="nucleotide sequence ID" value="XM_047439680.1"/>
</dbReference>
<dbReference type="RefSeq" id="XP_054178584.1">
    <molecule id="Q8TAF7-2"/>
    <property type="nucleotide sequence ID" value="XM_054322609.1"/>
</dbReference>
<dbReference type="RefSeq" id="XP_054178585.1">
    <molecule id="Q8TAF7-2"/>
    <property type="nucleotide sequence ID" value="XM_054322610.1"/>
</dbReference>
<dbReference type="SMR" id="Q8TAF7"/>
<dbReference type="BioGRID" id="124926">
    <property type="interactions" value="9"/>
</dbReference>
<dbReference type="FunCoup" id="Q8TAF7">
    <property type="interactions" value="86"/>
</dbReference>
<dbReference type="IntAct" id="Q8TAF7">
    <property type="interactions" value="2"/>
</dbReference>
<dbReference type="STRING" id="9606.ENSP00000467931"/>
<dbReference type="iPTMnet" id="Q8TAF7"/>
<dbReference type="PhosphoSitePlus" id="Q8TAF7"/>
<dbReference type="BioMuta" id="ZNF461"/>
<dbReference type="DMDM" id="51338811"/>
<dbReference type="jPOST" id="Q8TAF7"/>
<dbReference type="MassIVE" id="Q8TAF7"/>
<dbReference type="PaxDb" id="9606-ENSP00000467931"/>
<dbReference type="PeptideAtlas" id="Q8TAF7"/>
<dbReference type="Pumba" id="Q8TAF7"/>
<dbReference type="Antibodypedia" id="8537">
    <property type="antibodies" value="104 antibodies from 20 providers"/>
</dbReference>
<dbReference type="DNASU" id="92283"/>
<dbReference type="Ensembl" id="ENST00000588268.6">
    <molecule id="Q8TAF7-1"/>
    <property type="protein sequence ID" value="ENSP00000467931.1"/>
    <property type="gene ID" value="ENSG00000197808.14"/>
</dbReference>
<dbReference type="GeneID" id="92283"/>
<dbReference type="KEGG" id="hsa:92283"/>
<dbReference type="MANE-Select" id="ENST00000588268.6">
    <property type="protein sequence ID" value="ENSP00000467931.1"/>
    <property type="RefSeq nucleotide sequence ID" value="NM_153257.5"/>
    <property type="RefSeq protein sequence ID" value="NP_694989.2"/>
</dbReference>
<dbReference type="UCSC" id="uc002oem.4">
    <molecule id="Q8TAF7-1"/>
    <property type="organism name" value="human"/>
</dbReference>
<dbReference type="AGR" id="HGNC:21629"/>
<dbReference type="CTD" id="92283"/>
<dbReference type="DisGeNET" id="92283"/>
<dbReference type="GeneCards" id="ZNF461"/>
<dbReference type="HGNC" id="HGNC:21629">
    <property type="gene designation" value="ZNF461"/>
</dbReference>
<dbReference type="HPA" id="ENSG00000197808">
    <property type="expression patterns" value="Low tissue specificity"/>
</dbReference>
<dbReference type="MIM" id="608640">
    <property type="type" value="gene"/>
</dbReference>
<dbReference type="neXtProt" id="NX_Q8TAF7"/>
<dbReference type="OpenTargets" id="ENSG00000197808"/>
<dbReference type="PharmGKB" id="PA145149895"/>
<dbReference type="VEuPathDB" id="HostDB:ENSG00000197808"/>
<dbReference type="eggNOG" id="KOG1721">
    <property type="taxonomic scope" value="Eukaryota"/>
</dbReference>
<dbReference type="GeneTree" id="ENSGT00940000163325"/>
<dbReference type="HOGENOM" id="CLU_002678_44_5_1"/>
<dbReference type="InParanoid" id="Q8TAF7"/>
<dbReference type="OrthoDB" id="9821876at2759"/>
<dbReference type="PAN-GO" id="Q8TAF7">
    <property type="GO annotations" value="4 GO annotations based on evolutionary models"/>
</dbReference>
<dbReference type="PhylomeDB" id="Q8TAF7"/>
<dbReference type="PathwayCommons" id="Q8TAF7"/>
<dbReference type="Reactome" id="R-HSA-212436">
    <property type="pathway name" value="Generic Transcription Pathway"/>
</dbReference>
<dbReference type="SignaLink" id="Q8TAF7"/>
<dbReference type="BioGRID-ORCS" id="92283">
    <property type="hits" value="10 hits in 1171 CRISPR screens"/>
</dbReference>
<dbReference type="ChiTaRS" id="ZNF461">
    <property type="organism name" value="human"/>
</dbReference>
<dbReference type="GenomeRNAi" id="92283"/>
<dbReference type="Pharos" id="Q8TAF7">
    <property type="development level" value="Tdark"/>
</dbReference>
<dbReference type="PRO" id="PR:Q8TAF7"/>
<dbReference type="Proteomes" id="UP000005640">
    <property type="component" value="Chromosome 19"/>
</dbReference>
<dbReference type="RNAct" id="Q8TAF7">
    <property type="molecule type" value="protein"/>
</dbReference>
<dbReference type="Bgee" id="ENSG00000197808">
    <property type="expression patterns" value="Expressed in cortical plate and 97 other cell types or tissues"/>
</dbReference>
<dbReference type="ExpressionAtlas" id="Q8TAF7">
    <property type="expression patterns" value="baseline and differential"/>
</dbReference>
<dbReference type="GO" id="GO:0005634">
    <property type="term" value="C:nucleus"/>
    <property type="evidence" value="ECO:0000318"/>
    <property type="project" value="GO_Central"/>
</dbReference>
<dbReference type="GO" id="GO:0000981">
    <property type="term" value="F:DNA-binding transcription factor activity, RNA polymerase II-specific"/>
    <property type="evidence" value="ECO:0000318"/>
    <property type="project" value="GO_Central"/>
</dbReference>
<dbReference type="GO" id="GO:0000978">
    <property type="term" value="F:RNA polymerase II cis-regulatory region sequence-specific DNA binding"/>
    <property type="evidence" value="ECO:0000318"/>
    <property type="project" value="GO_Central"/>
</dbReference>
<dbReference type="GO" id="GO:0008270">
    <property type="term" value="F:zinc ion binding"/>
    <property type="evidence" value="ECO:0007669"/>
    <property type="project" value="UniProtKB-KW"/>
</dbReference>
<dbReference type="GO" id="GO:0006357">
    <property type="term" value="P:regulation of transcription by RNA polymerase II"/>
    <property type="evidence" value="ECO:0000318"/>
    <property type="project" value="GO_Central"/>
</dbReference>
<dbReference type="CDD" id="cd07765">
    <property type="entry name" value="KRAB_A-box"/>
    <property type="match status" value="1"/>
</dbReference>
<dbReference type="FunFam" id="3.30.160.60:FF:004935">
    <property type="match status" value="1"/>
</dbReference>
<dbReference type="FunFam" id="3.30.160.60:FF:000136">
    <property type="entry name" value="GLI family zinc finger 4"/>
    <property type="match status" value="1"/>
</dbReference>
<dbReference type="FunFam" id="3.30.160.60:FF:000020">
    <property type="entry name" value="Zinc finger protein 14 homolog"/>
    <property type="match status" value="1"/>
</dbReference>
<dbReference type="FunFam" id="3.30.160.60:FF:000434">
    <property type="entry name" value="zinc finger protein 30 homolog"/>
    <property type="match status" value="1"/>
</dbReference>
<dbReference type="FunFam" id="3.30.160.60:FF:002278">
    <property type="entry name" value="Zinc finger protein 320"/>
    <property type="match status" value="1"/>
</dbReference>
<dbReference type="FunFam" id="3.30.160.60:FF:002343">
    <property type="entry name" value="Zinc finger protein 33A"/>
    <property type="match status" value="1"/>
</dbReference>
<dbReference type="FunFam" id="3.30.160.60:FF:001498">
    <property type="entry name" value="Zinc finger protein 404"/>
    <property type="match status" value="1"/>
</dbReference>
<dbReference type="FunFam" id="3.30.160.60:FF:002882">
    <property type="entry name" value="Zinc finger protein 461"/>
    <property type="match status" value="1"/>
</dbReference>
<dbReference type="FunFam" id="3.30.160.60:FF:002254">
    <property type="entry name" value="Zinc finger protein 540"/>
    <property type="match status" value="1"/>
</dbReference>
<dbReference type="FunFam" id="3.30.160.60:FF:000292">
    <property type="entry name" value="zinc finger protein 619"/>
    <property type="match status" value="1"/>
</dbReference>
<dbReference type="FunFam" id="3.30.160.60:FF:001933">
    <property type="entry name" value="Zinc finger protein 870"/>
    <property type="match status" value="1"/>
</dbReference>
<dbReference type="Gene3D" id="6.10.140.140">
    <property type="match status" value="1"/>
</dbReference>
<dbReference type="Gene3D" id="3.30.160.60">
    <property type="entry name" value="Classic Zinc Finger"/>
    <property type="match status" value="10"/>
</dbReference>
<dbReference type="InterPro" id="IPR050752">
    <property type="entry name" value="C2H2-ZF_domain"/>
</dbReference>
<dbReference type="InterPro" id="IPR001909">
    <property type="entry name" value="KRAB"/>
</dbReference>
<dbReference type="InterPro" id="IPR036051">
    <property type="entry name" value="KRAB_dom_sf"/>
</dbReference>
<dbReference type="InterPro" id="IPR036236">
    <property type="entry name" value="Znf_C2H2_sf"/>
</dbReference>
<dbReference type="InterPro" id="IPR013087">
    <property type="entry name" value="Znf_C2H2_type"/>
</dbReference>
<dbReference type="PANTHER" id="PTHR24384">
    <property type="entry name" value="FINGER PUTATIVE TRANSCRIPTION FACTOR FAMILY-RELATED"/>
    <property type="match status" value="1"/>
</dbReference>
<dbReference type="PANTHER" id="PTHR24384:SF235">
    <property type="entry name" value="ZINC FINGER PROTEIN 519"/>
    <property type="match status" value="1"/>
</dbReference>
<dbReference type="Pfam" id="PF01352">
    <property type="entry name" value="KRAB"/>
    <property type="match status" value="1"/>
</dbReference>
<dbReference type="Pfam" id="PF00096">
    <property type="entry name" value="zf-C2H2"/>
    <property type="match status" value="9"/>
</dbReference>
<dbReference type="SMART" id="SM00349">
    <property type="entry name" value="KRAB"/>
    <property type="match status" value="1"/>
</dbReference>
<dbReference type="SMART" id="SM00355">
    <property type="entry name" value="ZnF_C2H2"/>
    <property type="match status" value="12"/>
</dbReference>
<dbReference type="SUPFAM" id="SSF57667">
    <property type="entry name" value="beta-beta-alpha zinc fingers"/>
    <property type="match status" value="6"/>
</dbReference>
<dbReference type="SUPFAM" id="SSF109640">
    <property type="entry name" value="KRAB domain (Kruppel-associated box)"/>
    <property type="match status" value="1"/>
</dbReference>
<dbReference type="PROSITE" id="PS50805">
    <property type="entry name" value="KRAB"/>
    <property type="match status" value="1"/>
</dbReference>
<dbReference type="PROSITE" id="PS00028">
    <property type="entry name" value="ZINC_FINGER_C2H2_1"/>
    <property type="match status" value="10"/>
</dbReference>
<dbReference type="PROSITE" id="PS50157">
    <property type="entry name" value="ZINC_FINGER_C2H2_2"/>
    <property type="match status" value="12"/>
</dbReference>
<keyword id="KW-0025">Alternative splicing</keyword>
<keyword id="KW-0238">DNA-binding</keyword>
<keyword id="KW-0479">Metal-binding</keyword>
<keyword id="KW-0539">Nucleus</keyword>
<keyword id="KW-1267">Proteomics identification</keyword>
<keyword id="KW-1185">Reference proteome</keyword>
<keyword id="KW-0677">Repeat</keyword>
<keyword id="KW-0804">Transcription</keyword>
<keyword id="KW-0805">Transcription regulation</keyword>
<keyword id="KW-0862">Zinc</keyword>
<keyword id="KW-0863">Zinc-finger</keyword>